<comment type="function">
    <text evidence="1">Has antimicrobial activity.</text>
</comment>
<comment type="subcellular location">
    <subcellularLocation>
        <location evidence="3">Secreted</location>
    </subcellularLocation>
</comment>
<comment type="tissue specificity">
    <text evidence="3">Expressed by the skin glands.</text>
</comment>
<comment type="mass spectrometry"/>
<comment type="similarity">
    <text evidence="2">Belongs to the frog skin active peptide (FSAP) family. Phylloseptin subfamily.</text>
</comment>
<name>PLS1_PITAZ</name>
<proteinExistence type="evidence at protein level"/>
<evidence type="ECO:0000250" key="1">
    <source>
        <dbReference type="UniProtKB" id="P84572"/>
    </source>
</evidence>
<evidence type="ECO:0000255" key="2"/>
<evidence type="ECO:0000269" key="3">
    <source>
    </source>
</evidence>
<evidence type="ECO:0000303" key="4">
    <source>
    </source>
</evidence>
<evidence type="ECO:0000305" key="5"/>
<accession>P85881</accession>
<feature type="signal peptide" evidence="2">
    <location>
        <begin position="1" status="less than"/>
        <end position="19"/>
    </location>
</feature>
<feature type="propeptide" id="PRO_0000372699" evidence="3">
    <location>
        <begin position="20"/>
        <end position="41"/>
    </location>
</feature>
<feature type="peptide" id="PRO_0000372700" description="Phylloseptin-Az1" evidence="3">
    <location>
        <begin position="44"/>
        <end position="62"/>
    </location>
</feature>
<feature type="modified residue" description="Phenylalanine amide" evidence="3">
    <location>
        <position position="62"/>
    </location>
</feature>
<feature type="non-terminal residue" evidence="4">
    <location>
        <position position="1"/>
    </location>
</feature>
<sequence>LKKSLFLVVFLGLATLSICEEEKRETEEEEYNQGEDDKSEEKRFLSLIPHAINAVSTLVHHFG</sequence>
<organism>
    <name type="scientific">Pithecopus azureus</name>
    <name type="common">Orange-legged monkey tree frog</name>
    <name type="synonym">Phyllomedusa azurea</name>
    <dbReference type="NCBI Taxonomy" id="2034991"/>
    <lineage>
        <taxon>Eukaryota</taxon>
        <taxon>Metazoa</taxon>
        <taxon>Chordata</taxon>
        <taxon>Craniata</taxon>
        <taxon>Vertebrata</taxon>
        <taxon>Euteleostomi</taxon>
        <taxon>Amphibia</taxon>
        <taxon>Batrachia</taxon>
        <taxon>Anura</taxon>
        <taxon>Neobatrachia</taxon>
        <taxon>Hyloidea</taxon>
        <taxon>Hylidae</taxon>
        <taxon>Phyllomedusinae</taxon>
        <taxon>Pithecopus</taxon>
    </lineage>
</organism>
<protein>
    <recommendedName>
        <fullName evidence="5">Phylloseptin-Az1</fullName>
        <shortName evidence="5">PLS-Az1</shortName>
    </recommendedName>
    <alternativeName>
        <fullName evidence="4">Phylloseptin-2</fullName>
        <shortName evidence="4">PS-2</shortName>
    </alternativeName>
</protein>
<reference evidence="5" key="1">
    <citation type="journal article" date="2007" name="Peptides">
        <title>A combined mass spectrometric and cDNA sequencing approach to the isolation and characterization of novel antimicrobial peptides from the skin secretions of Phyllomedusa hypochondrialis azurea.</title>
        <authorList>
            <person name="Thompson A.H."/>
            <person name="Bjourson A.J."/>
            <person name="Orr D.F."/>
            <person name="Shaw C."/>
            <person name="McClean S."/>
        </authorList>
    </citation>
    <scope>NUCLEOTIDE SEQUENCE [MRNA]</scope>
    <scope>PROTEIN SEQUENCE OF 44-62</scope>
    <scope>SUBCELLULAR LOCATION</scope>
    <scope>TISSUE SPECIFICITY</scope>
    <scope>MASS SPECTROMETRY</scope>
    <scope>AMIDATION AT PHE-62</scope>
    <source>
        <tissue evidence="3">Skin secretion</tissue>
    </source>
</reference>
<dbReference type="GO" id="GO:0005576">
    <property type="term" value="C:extracellular region"/>
    <property type="evidence" value="ECO:0007669"/>
    <property type="project" value="UniProtKB-SubCell"/>
</dbReference>
<dbReference type="GO" id="GO:0042742">
    <property type="term" value="P:defense response to bacterium"/>
    <property type="evidence" value="ECO:0007669"/>
    <property type="project" value="UniProtKB-KW"/>
</dbReference>
<dbReference type="InterPro" id="IPR004275">
    <property type="entry name" value="Frog_antimicrobial_propeptide"/>
</dbReference>
<dbReference type="Pfam" id="PF03032">
    <property type="entry name" value="FSAP_sig_propep"/>
    <property type="match status" value="1"/>
</dbReference>
<keyword id="KW-0027">Amidation</keyword>
<keyword id="KW-0878">Amphibian defense peptide</keyword>
<keyword id="KW-0044">Antibiotic</keyword>
<keyword id="KW-0929">Antimicrobial</keyword>
<keyword id="KW-0165">Cleavage on pair of basic residues</keyword>
<keyword id="KW-0903">Direct protein sequencing</keyword>
<keyword id="KW-0964">Secreted</keyword>
<keyword id="KW-0732">Signal</keyword>